<proteinExistence type="evidence at transcript level"/>
<reference key="1">
    <citation type="journal article" date="1996" name="Biochim. Biophys. Acta">
        <title>Maternal and zygotic expression of mRNA for S-adenosylmethionine decarboxylase and its relevance to the unique polyamine composition in Xenopus oocytes and embryos.</title>
        <authorList>
            <person name="Shinga J."/>
            <person name="Kashiwagi K."/>
            <person name="Tashiro K."/>
            <person name="Igarashi K."/>
            <person name="Shiokawa K."/>
        </authorList>
    </citation>
    <scope>NUCLEOTIDE SEQUENCE [MRNA]</scope>
    <source>
        <tissue>Tail bud</tissue>
    </source>
</reference>
<reference key="2">
    <citation type="submission" date="2003-01" db="EMBL/GenBank/DDBJ databases">
        <authorList>
            <consortium name="NIH - Xenopus Gene Collection (XGC) project"/>
        </authorList>
    </citation>
    <scope>NUCLEOTIDE SEQUENCE [LARGE SCALE MRNA]</scope>
    <source>
        <tissue>Embryo</tissue>
    </source>
</reference>
<feature type="chain" id="PRO_0000029971" description="S-adenosylmethionine decarboxylase beta chain">
    <location>
        <begin position="1"/>
        <end position="69"/>
    </location>
</feature>
<feature type="chain" id="PRO_0000029972" description="S-adenosylmethionine decarboxylase alpha chain">
    <location>
        <begin position="70"/>
        <end position="335"/>
    </location>
</feature>
<feature type="active site" evidence="1">
    <location>
        <position position="12"/>
    </location>
</feature>
<feature type="active site" evidence="1">
    <location>
        <position position="15"/>
    </location>
</feature>
<feature type="active site" description="Schiff-base intermediate with substrate; via pyruvic acid" evidence="1">
    <location>
        <position position="70"/>
    </location>
</feature>
<feature type="active site" description="Proton donor; for catalytic activity" evidence="1">
    <location>
        <position position="84"/>
    </location>
</feature>
<feature type="active site" description="Proton acceptor; for processing activity" evidence="1">
    <location>
        <position position="231"/>
    </location>
</feature>
<feature type="active site" description="Proton acceptor; for processing activity" evidence="1">
    <location>
        <position position="245"/>
    </location>
</feature>
<feature type="site" description="Cleavage (non-hydrolytic); by autolysis" evidence="1">
    <location>
        <begin position="69"/>
        <end position="70"/>
    </location>
</feature>
<feature type="modified residue" description="Pyruvic acid (Ser); by autocatalysis" evidence="1">
    <location>
        <position position="70"/>
    </location>
</feature>
<name>DCAM_XENLA</name>
<accession>P79888</accession>
<accession>Q5D0C5</accession>
<gene>
    <name type="primary">amd1</name>
</gene>
<sequence>MKMEESAAHFFEGTEKLLELWFSQQDASKGSGDLRDIPRFEWDKLLENVHCLIISVTKTDKQEAYVLSESSMFVSKRRFILKTCGTTLLLQALVPLLELAREYCGFDGIQNFFYSRKNFMKPNHQEYPHRNFHEEVEFLNQIFPNGAAYCMGRINSDCWYLYTLDIPDEYVISQPDQTLEILMSELDPEVMDQFYMKEGVTANDVTRVSGIRDLITGSVIDATMFSPCGYSMNGMKSDGTYWTIHITPEPDFSYVSFETNVSLTTYDDLISKVVDVFKPRKFVTTLFVNQSSKCRTTFSCAQKIEGFRRVDRQFAQFNDYNFVFTSFAKIQPQQS</sequence>
<keyword id="KW-0068">Autocatalytic cleavage</keyword>
<keyword id="KW-0210">Decarboxylase</keyword>
<keyword id="KW-0456">Lyase</keyword>
<keyword id="KW-0620">Polyamine biosynthesis</keyword>
<keyword id="KW-0670">Pyruvate</keyword>
<keyword id="KW-1185">Reference proteome</keyword>
<keyword id="KW-0949">S-adenosyl-L-methionine</keyword>
<keyword id="KW-0704">Schiff base</keyword>
<keyword id="KW-0745">Spermidine biosynthesis</keyword>
<keyword id="KW-0865">Zymogen</keyword>
<organism>
    <name type="scientific">Xenopus laevis</name>
    <name type="common">African clawed frog</name>
    <dbReference type="NCBI Taxonomy" id="8355"/>
    <lineage>
        <taxon>Eukaryota</taxon>
        <taxon>Metazoa</taxon>
        <taxon>Chordata</taxon>
        <taxon>Craniata</taxon>
        <taxon>Vertebrata</taxon>
        <taxon>Euteleostomi</taxon>
        <taxon>Amphibia</taxon>
        <taxon>Batrachia</taxon>
        <taxon>Anura</taxon>
        <taxon>Pipoidea</taxon>
        <taxon>Pipidae</taxon>
        <taxon>Xenopodinae</taxon>
        <taxon>Xenopus</taxon>
        <taxon>Xenopus</taxon>
    </lineage>
</organism>
<dbReference type="EC" id="4.1.1.50"/>
<dbReference type="EMBL" id="S82621">
    <property type="protein sequence ID" value="AAB36519.1"/>
    <property type="molecule type" value="mRNA"/>
</dbReference>
<dbReference type="EMBL" id="BC042281">
    <property type="protein sequence ID" value="AAH42281.1"/>
    <property type="molecule type" value="mRNA"/>
</dbReference>
<dbReference type="PIR" id="S72197">
    <property type="entry name" value="S72197"/>
</dbReference>
<dbReference type="RefSeq" id="NP_001080360.1">
    <property type="nucleotide sequence ID" value="NM_001086891.1"/>
</dbReference>
<dbReference type="SMR" id="P79888"/>
<dbReference type="DNASU" id="380052"/>
<dbReference type="GeneID" id="380052"/>
<dbReference type="KEGG" id="xla:380052"/>
<dbReference type="AGR" id="Xenbase:XB-GENE-484615"/>
<dbReference type="CTD" id="380052"/>
<dbReference type="Xenbase" id="XB-GENE-484615">
    <property type="gene designation" value="amd1.L"/>
</dbReference>
<dbReference type="OrthoDB" id="1068353at2759"/>
<dbReference type="UniPathway" id="UPA00331">
    <property type="reaction ID" value="UER00451"/>
</dbReference>
<dbReference type="Proteomes" id="UP000186698">
    <property type="component" value="Chromosome 5L"/>
</dbReference>
<dbReference type="Bgee" id="380052">
    <property type="expression patterns" value="Expressed in brain and 19 other cell types or tissues"/>
</dbReference>
<dbReference type="GO" id="GO:0005829">
    <property type="term" value="C:cytosol"/>
    <property type="evidence" value="ECO:0000318"/>
    <property type="project" value="GO_Central"/>
</dbReference>
<dbReference type="GO" id="GO:0004014">
    <property type="term" value="F:adenosylmethionine decarboxylase activity"/>
    <property type="evidence" value="ECO:0000318"/>
    <property type="project" value="GO_Central"/>
</dbReference>
<dbReference type="GO" id="GO:0008295">
    <property type="term" value="P:spermidine biosynthetic process"/>
    <property type="evidence" value="ECO:0000318"/>
    <property type="project" value="GO_Central"/>
</dbReference>
<dbReference type="GO" id="GO:0006597">
    <property type="term" value="P:spermine biosynthetic process"/>
    <property type="evidence" value="ECO:0000318"/>
    <property type="project" value="GO_Central"/>
</dbReference>
<dbReference type="FunFam" id="3.60.90.10:FF:000003">
    <property type="entry name" value="S-adenosylmethionine decarboxylase proenzyme"/>
    <property type="match status" value="1"/>
</dbReference>
<dbReference type="Gene3D" id="3.60.90.10">
    <property type="entry name" value="S-adenosylmethionine decarboxylase"/>
    <property type="match status" value="1"/>
</dbReference>
<dbReference type="InterPro" id="IPR048283">
    <property type="entry name" value="AdoMetDC-like"/>
</dbReference>
<dbReference type="InterPro" id="IPR001985">
    <property type="entry name" value="S-AdoMet_decarboxylase_euk"/>
</dbReference>
<dbReference type="InterPro" id="IPR016067">
    <property type="entry name" value="S-AdoMet_deCO2ase_core"/>
</dbReference>
<dbReference type="InterPro" id="IPR018166">
    <property type="entry name" value="S-AdoMet_deCO2ase_CS"/>
</dbReference>
<dbReference type="NCBIfam" id="TIGR00535">
    <property type="entry name" value="SAM_DCase"/>
    <property type="match status" value="1"/>
</dbReference>
<dbReference type="PANTHER" id="PTHR11570">
    <property type="entry name" value="S-ADENOSYLMETHIONINE DECARBOXYLASE"/>
    <property type="match status" value="1"/>
</dbReference>
<dbReference type="PANTHER" id="PTHR11570:SF0">
    <property type="entry name" value="S-ADENOSYLMETHIONINE DECARBOXYLASE PROENZYME"/>
    <property type="match status" value="1"/>
</dbReference>
<dbReference type="Pfam" id="PF01536">
    <property type="entry name" value="SAM_decarbox"/>
    <property type="match status" value="1"/>
</dbReference>
<dbReference type="PIRSF" id="PIRSF001355">
    <property type="entry name" value="S-AdenosylMet_decarboxylase"/>
    <property type="match status" value="1"/>
</dbReference>
<dbReference type="SUPFAM" id="SSF56276">
    <property type="entry name" value="S-adenosylmethionine decarboxylase"/>
    <property type="match status" value="1"/>
</dbReference>
<dbReference type="PROSITE" id="PS01336">
    <property type="entry name" value="ADOMETDC"/>
    <property type="match status" value="1"/>
</dbReference>
<comment type="function">
    <text>Essential for biosynthesis of the polyamines spermidine and spermine. Promotes maintenance and self-renewal of embryonic stem cells, by maintaining spermine levels.</text>
</comment>
<comment type="catalytic activity">
    <reaction>
        <text>S-adenosyl-L-methionine + H(+) = S-adenosyl 3-(methylsulfanyl)propylamine + CO2</text>
        <dbReference type="Rhea" id="RHEA:15981"/>
        <dbReference type="ChEBI" id="CHEBI:15378"/>
        <dbReference type="ChEBI" id="CHEBI:16526"/>
        <dbReference type="ChEBI" id="CHEBI:57443"/>
        <dbReference type="ChEBI" id="CHEBI:59789"/>
        <dbReference type="EC" id="4.1.1.50"/>
    </reaction>
</comment>
<comment type="cofactor">
    <cofactor>
        <name>pyruvate</name>
        <dbReference type="ChEBI" id="CHEBI:15361"/>
    </cofactor>
    <text>Binds 1 pyruvoyl group covalently per subunit.</text>
</comment>
<comment type="pathway">
    <text>Amine and polyamine biosynthesis; S-adenosylmethioninamine biosynthesis; S-adenosylmethioninamine from S-adenosyl-L-methionine: step 1/1.</text>
</comment>
<comment type="developmental stage">
    <text>First expressed at stage I of oocyte development, and is maximally expressed at stage II. Levels decline during oocyte maturation and after fertilization, and also in the early neurula. Levels increase dramatically during the late neurula stage reaching a maximum at the tail bud stage.</text>
</comment>
<comment type="PTM">
    <text evidence="1">Is synthesized initially as an inactive proenzyme. Formation of the active enzyme involves a self-maturation process in which the active site pyruvoyl group is generated from an internal serine residue via an autocatalytic post-translational modification. Two non-identical subunits are generated from the proenzyme in this reaction, and the pyruvate is formed at the N-terminus of the alpha chain, which is derived from the carboxyl end of the proenzyme. The post-translation cleavage follows an unusual pathway, termed non-hydrolytic serinolysis, in which the side chain hydroxyl group of the serine supplies its oxygen atom to form the C-terminus of the beta chain, while the remainder of the serine residue undergoes an oxidative deamination to produce ammonia and the pyruvoyl group blocking the N-terminus of the alpha chain (By similarity).</text>
</comment>
<comment type="similarity">
    <text evidence="2">Belongs to the eukaryotic AdoMetDC family.</text>
</comment>
<comment type="caution">
    <text evidence="2">It is uncertain whether Met-1 or Met-3 is the initiator.</text>
</comment>
<evidence type="ECO:0000250" key="1"/>
<evidence type="ECO:0000305" key="2"/>
<protein>
    <recommendedName>
        <fullName>S-adenosylmethionine decarboxylase proenzyme</fullName>
        <shortName>AdoMetDC</shortName>
        <shortName>SAMDC</shortName>
        <ecNumber>4.1.1.50</ecNumber>
    </recommendedName>
    <component>
        <recommendedName>
            <fullName>S-adenosylmethionine decarboxylase alpha chain</fullName>
        </recommendedName>
    </component>
    <component>
        <recommendedName>
            <fullName>S-adenosylmethionine decarboxylase beta chain</fullName>
        </recommendedName>
    </component>
</protein>